<accession>Q0VNE4</accession>
<reference key="1">
    <citation type="journal article" date="2006" name="Nat. Biotechnol.">
        <title>Genome sequence of the ubiquitous hydrocarbon-degrading marine bacterium Alcanivorax borkumensis.</title>
        <authorList>
            <person name="Schneiker S."/>
            <person name="Martins dos Santos V.A.P."/>
            <person name="Bartels D."/>
            <person name="Bekel T."/>
            <person name="Brecht M."/>
            <person name="Buhrmester J."/>
            <person name="Chernikova T.N."/>
            <person name="Denaro R."/>
            <person name="Ferrer M."/>
            <person name="Gertler C."/>
            <person name="Goesmann A."/>
            <person name="Golyshina O.V."/>
            <person name="Kaminski F."/>
            <person name="Khachane A.N."/>
            <person name="Lang S."/>
            <person name="Linke B."/>
            <person name="McHardy A.C."/>
            <person name="Meyer F."/>
            <person name="Nechitaylo T."/>
            <person name="Puehler A."/>
            <person name="Regenhardt D."/>
            <person name="Rupp O."/>
            <person name="Sabirova J.S."/>
            <person name="Selbitschka W."/>
            <person name="Yakimov M.M."/>
            <person name="Timmis K.N."/>
            <person name="Vorhoelter F.-J."/>
            <person name="Weidner S."/>
            <person name="Kaiser O."/>
            <person name="Golyshin P.N."/>
        </authorList>
    </citation>
    <scope>NUCLEOTIDE SEQUENCE [LARGE SCALE GENOMIC DNA]</scope>
    <source>
        <strain>ATCC 700651 / DSM 11573 / NCIMB 13689 / SK2</strain>
    </source>
</reference>
<organism>
    <name type="scientific">Alcanivorax borkumensis (strain ATCC 700651 / DSM 11573 / NCIMB 13689 / SK2)</name>
    <dbReference type="NCBI Taxonomy" id="393595"/>
    <lineage>
        <taxon>Bacteria</taxon>
        <taxon>Pseudomonadati</taxon>
        <taxon>Pseudomonadota</taxon>
        <taxon>Gammaproteobacteria</taxon>
        <taxon>Oceanospirillales</taxon>
        <taxon>Alcanivoracaceae</taxon>
        <taxon>Alcanivorax</taxon>
    </lineage>
</organism>
<feature type="chain" id="PRO_1000058518" description="GTPase Der">
    <location>
        <begin position="1"/>
        <end position="471"/>
    </location>
</feature>
<feature type="domain" description="EngA-type G 1">
    <location>
        <begin position="5"/>
        <end position="168"/>
    </location>
</feature>
<feature type="domain" description="EngA-type G 2">
    <location>
        <begin position="186"/>
        <end position="359"/>
    </location>
</feature>
<feature type="domain" description="KH-like" evidence="1">
    <location>
        <begin position="360"/>
        <end position="444"/>
    </location>
</feature>
<feature type="binding site" evidence="1">
    <location>
        <begin position="11"/>
        <end position="18"/>
    </location>
    <ligand>
        <name>GTP</name>
        <dbReference type="ChEBI" id="CHEBI:37565"/>
        <label>1</label>
    </ligand>
</feature>
<feature type="binding site" evidence="1">
    <location>
        <begin position="58"/>
        <end position="62"/>
    </location>
    <ligand>
        <name>GTP</name>
        <dbReference type="ChEBI" id="CHEBI:37565"/>
        <label>1</label>
    </ligand>
</feature>
<feature type="binding site" evidence="1">
    <location>
        <begin position="120"/>
        <end position="123"/>
    </location>
    <ligand>
        <name>GTP</name>
        <dbReference type="ChEBI" id="CHEBI:37565"/>
        <label>1</label>
    </ligand>
</feature>
<feature type="binding site" evidence="1">
    <location>
        <begin position="192"/>
        <end position="199"/>
    </location>
    <ligand>
        <name>GTP</name>
        <dbReference type="ChEBI" id="CHEBI:37565"/>
        <label>2</label>
    </ligand>
</feature>
<feature type="binding site" evidence="1">
    <location>
        <begin position="239"/>
        <end position="243"/>
    </location>
    <ligand>
        <name>GTP</name>
        <dbReference type="ChEBI" id="CHEBI:37565"/>
        <label>2</label>
    </ligand>
</feature>
<feature type="binding site" evidence="1">
    <location>
        <begin position="304"/>
        <end position="307"/>
    </location>
    <ligand>
        <name>GTP</name>
        <dbReference type="ChEBI" id="CHEBI:37565"/>
        <label>2</label>
    </ligand>
</feature>
<dbReference type="EMBL" id="AM286690">
    <property type="protein sequence ID" value="CAL17304.1"/>
    <property type="molecule type" value="Genomic_DNA"/>
</dbReference>
<dbReference type="SMR" id="Q0VNE4"/>
<dbReference type="STRING" id="393595.ABO_1856"/>
<dbReference type="KEGG" id="abo:ABO_1856"/>
<dbReference type="eggNOG" id="COG1160">
    <property type="taxonomic scope" value="Bacteria"/>
</dbReference>
<dbReference type="HOGENOM" id="CLU_016077_6_2_6"/>
<dbReference type="Proteomes" id="UP000008871">
    <property type="component" value="Chromosome"/>
</dbReference>
<dbReference type="GO" id="GO:0005525">
    <property type="term" value="F:GTP binding"/>
    <property type="evidence" value="ECO:0007669"/>
    <property type="project" value="UniProtKB-UniRule"/>
</dbReference>
<dbReference type="GO" id="GO:0043022">
    <property type="term" value="F:ribosome binding"/>
    <property type="evidence" value="ECO:0007669"/>
    <property type="project" value="TreeGrafter"/>
</dbReference>
<dbReference type="GO" id="GO:0042254">
    <property type="term" value="P:ribosome biogenesis"/>
    <property type="evidence" value="ECO:0007669"/>
    <property type="project" value="UniProtKB-KW"/>
</dbReference>
<dbReference type="CDD" id="cd01894">
    <property type="entry name" value="EngA1"/>
    <property type="match status" value="1"/>
</dbReference>
<dbReference type="CDD" id="cd01895">
    <property type="entry name" value="EngA2"/>
    <property type="match status" value="1"/>
</dbReference>
<dbReference type="FunFam" id="3.30.300.20:FF:000004">
    <property type="entry name" value="GTPase Der"/>
    <property type="match status" value="1"/>
</dbReference>
<dbReference type="FunFam" id="3.40.50.300:FF:000040">
    <property type="entry name" value="GTPase Der"/>
    <property type="match status" value="1"/>
</dbReference>
<dbReference type="FunFam" id="3.40.50.300:FF:000057">
    <property type="entry name" value="GTPase Der"/>
    <property type="match status" value="1"/>
</dbReference>
<dbReference type="Gene3D" id="3.30.300.20">
    <property type="match status" value="1"/>
</dbReference>
<dbReference type="Gene3D" id="3.40.50.300">
    <property type="entry name" value="P-loop containing nucleotide triphosphate hydrolases"/>
    <property type="match status" value="2"/>
</dbReference>
<dbReference type="HAMAP" id="MF_00195">
    <property type="entry name" value="GTPase_Der"/>
    <property type="match status" value="1"/>
</dbReference>
<dbReference type="InterPro" id="IPR031166">
    <property type="entry name" value="G_ENGA"/>
</dbReference>
<dbReference type="InterPro" id="IPR006073">
    <property type="entry name" value="GTP-bd"/>
</dbReference>
<dbReference type="InterPro" id="IPR016484">
    <property type="entry name" value="GTPase_Der"/>
</dbReference>
<dbReference type="InterPro" id="IPR032859">
    <property type="entry name" value="KH_dom-like"/>
</dbReference>
<dbReference type="InterPro" id="IPR015946">
    <property type="entry name" value="KH_dom-like_a/b"/>
</dbReference>
<dbReference type="InterPro" id="IPR027417">
    <property type="entry name" value="P-loop_NTPase"/>
</dbReference>
<dbReference type="InterPro" id="IPR005225">
    <property type="entry name" value="Small_GTP-bd"/>
</dbReference>
<dbReference type="NCBIfam" id="TIGR03594">
    <property type="entry name" value="GTPase_EngA"/>
    <property type="match status" value="1"/>
</dbReference>
<dbReference type="NCBIfam" id="TIGR00231">
    <property type="entry name" value="small_GTP"/>
    <property type="match status" value="2"/>
</dbReference>
<dbReference type="PANTHER" id="PTHR43834">
    <property type="entry name" value="GTPASE DER"/>
    <property type="match status" value="1"/>
</dbReference>
<dbReference type="PANTHER" id="PTHR43834:SF6">
    <property type="entry name" value="GTPASE DER"/>
    <property type="match status" value="1"/>
</dbReference>
<dbReference type="Pfam" id="PF14714">
    <property type="entry name" value="KH_dom-like"/>
    <property type="match status" value="1"/>
</dbReference>
<dbReference type="Pfam" id="PF01926">
    <property type="entry name" value="MMR_HSR1"/>
    <property type="match status" value="2"/>
</dbReference>
<dbReference type="PIRSF" id="PIRSF006485">
    <property type="entry name" value="GTP-binding_EngA"/>
    <property type="match status" value="1"/>
</dbReference>
<dbReference type="PRINTS" id="PR00326">
    <property type="entry name" value="GTP1OBG"/>
</dbReference>
<dbReference type="SUPFAM" id="SSF52540">
    <property type="entry name" value="P-loop containing nucleoside triphosphate hydrolases"/>
    <property type="match status" value="2"/>
</dbReference>
<dbReference type="PROSITE" id="PS51712">
    <property type="entry name" value="G_ENGA"/>
    <property type="match status" value="2"/>
</dbReference>
<sequence>MTMKPVIALVGRPNVGKSTLFNRLTRTRDALVADFPGLTRDRKYGDGQLGGYLYTVVDTGGIGENDDGIDVPMTSQSLQAVGEADVVLFMVDGRAGLTAADEQIASELRKLPKPTYLIVNKTDGVDADSAMSEFFALGLTEVLPIAAAHGRGVTSMIEHILEGFTDLELLPEGEHRTSKKPGEDSIRVAVLGRPNVGKSTLINRMLGEERVVVFDHAGTTRDSIEVPFERMGRAYTLIDTAGVRRRGKVFEMVEKFSVIKALQAMEAAQVVVVVIDAREGITDQDLHLLGYALDSGRALMIAVNKWDGLEADHKERVRVNLGRRLEFAPWVKIKFISALHGTGVGDLWGMVEQAWDSAFIKIGTNELTRMMEEITNGHPPPRNGRFRAKLRYAHLGGNNPPTLVLHGNRTEALPTSYKKFLENRFRELLKLEGTPIRLEFKSGTNPYEGRKNVLTDRQVHKRKRMIKRMKK</sequence>
<proteinExistence type="inferred from homology"/>
<gene>
    <name evidence="1" type="primary">der</name>
    <name type="synonym">engA</name>
    <name type="ordered locus">ABO_1856</name>
</gene>
<comment type="function">
    <text evidence="1">GTPase that plays an essential role in the late steps of ribosome biogenesis.</text>
</comment>
<comment type="subunit">
    <text evidence="1">Associates with the 50S ribosomal subunit.</text>
</comment>
<comment type="similarity">
    <text evidence="1">Belongs to the TRAFAC class TrmE-Era-EngA-EngB-Septin-like GTPase superfamily. EngA (Der) GTPase family.</text>
</comment>
<name>DER_ALCBS</name>
<protein>
    <recommendedName>
        <fullName evidence="1">GTPase Der</fullName>
    </recommendedName>
    <alternativeName>
        <fullName evidence="1">GTP-binding protein EngA</fullName>
    </alternativeName>
</protein>
<keyword id="KW-0342">GTP-binding</keyword>
<keyword id="KW-0547">Nucleotide-binding</keyword>
<keyword id="KW-1185">Reference proteome</keyword>
<keyword id="KW-0677">Repeat</keyword>
<keyword id="KW-0690">Ribosome biogenesis</keyword>
<evidence type="ECO:0000255" key="1">
    <source>
        <dbReference type="HAMAP-Rule" id="MF_00195"/>
    </source>
</evidence>